<sequence length="313" mass="34595">MTHVPVLYTQAMEGLRVVENGTYLDGTFGRGGHARGVLQQLGPGGRLLVMDKDPEAIAMAERAFSCDPRVVIRHGSFALLAQLAAPQSLDGVLFDLGVSSPQLDVPERGFSFAKDGPLDMRMDPEMGESAAQWLARVSEREIADVLWTYGEEKQSRRIARAIVAYRANQPLLRTVQLAELIASVMLRTKFGACKSRIHPATRSFQGIRIHVNRELVDLEVGLEAALAALRPGGRLVVISFHSLEDRIVKQFISRHSKVPPTNRRLPEVQTFVPLLRMIGRAIKADEDELEVNPRARSAVLRVAEKLDVLGAVR</sequence>
<keyword id="KW-0963">Cytoplasm</keyword>
<keyword id="KW-0489">Methyltransferase</keyword>
<keyword id="KW-0698">rRNA processing</keyword>
<keyword id="KW-0949">S-adenosyl-L-methionine</keyword>
<keyword id="KW-0808">Transferase</keyword>
<name>RSMH_XYLF2</name>
<comment type="function">
    <text evidence="1">Specifically methylates the N4 position of cytidine in position 1402 (C1402) of 16S rRNA.</text>
</comment>
<comment type="catalytic activity">
    <reaction evidence="1">
        <text>cytidine(1402) in 16S rRNA + S-adenosyl-L-methionine = N(4)-methylcytidine(1402) in 16S rRNA + S-adenosyl-L-homocysteine + H(+)</text>
        <dbReference type="Rhea" id="RHEA:42928"/>
        <dbReference type="Rhea" id="RHEA-COMP:10286"/>
        <dbReference type="Rhea" id="RHEA-COMP:10287"/>
        <dbReference type="ChEBI" id="CHEBI:15378"/>
        <dbReference type="ChEBI" id="CHEBI:57856"/>
        <dbReference type="ChEBI" id="CHEBI:59789"/>
        <dbReference type="ChEBI" id="CHEBI:74506"/>
        <dbReference type="ChEBI" id="CHEBI:82748"/>
        <dbReference type="EC" id="2.1.1.199"/>
    </reaction>
</comment>
<comment type="subcellular location">
    <subcellularLocation>
        <location evidence="1">Cytoplasm</location>
    </subcellularLocation>
</comment>
<comment type="similarity">
    <text evidence="1">Belongs to the methyltransferase superfamily. RsmH family.</text>
</comment>
<comment type="sequence caution" evidence="2">
    <conflict type="erroneous initiation">
        <sequence resource="EMBL-CDS" id="ACB93375"/>
    </conflict>
</comment>
<accession>B2I9C0</accession>
<feature type="chain" id="PRO_0000387217" description="Ribosomal RNA small subunit methyltransferase H">
    <location>
        <begin position="1"/>
        <end position="313"/>
    </location>
</feature>
<feature type="binding site" evidence="1">
    <location>
        <begin position="31"/>
        <end position="33"/>
    </location>
    <ligand>
        <name>S-adenosyl-L-methionine</name>
        <dbReference type="ChEBI" id="CHEBI:59789"/>
    </ligand>
</feature>
<feature type="binding site" evidence="1">
    <location>
        <position position="51"/>
    </location>
    <ligand>
        <name>S-adenosyl-L-methionine</name>
        <dbReference type="ChEBI" id="CHEBI:59789"/>
    </ligand>
</feature>
<feature type="binding site" evidence="1">
    <location>
        <position position="77"/>
    </location>
    <ligand>
        <name>S-adenosyl-L-methionine</name>
        <dbReference type="ChEBI" id="CHEBI:59789"/>
    </ligand>
</feature>
<feature type="binding site" evidence="1">
    <location>
        <position position="95"/>
    </location>
    <ligand>
        <name>S-adenosyl-L-methionine</name>
        <dbReference type="ChEBI" id="CHEBI:59789"/>
    </ligand>
</feature>
<feature type="binding site" evidence="1">
    <location>
        <position position="102"/>
    </location>
    <ligand>
        <name>S-adenosyl-L-methionine</name>
        <dbReference type="ChEBI" id="CHEBI:59789"/>
    </ligand>
</feature>
<proteinExistence type="inferred from homology"/>
<reference key="1">
    <citation type="journal article" date="2010" name="J. Bacteriol.">
        <title>Whole genome sequences of two Xylella fastidiosa strains (M12 and M23) causing almond leaf scorch disease in California.</title>
        <authorList>
            <person name="Chen J."/>
            <person name="Xie G."/>
            <person name="Han S."/>
            <person name="Chertkov O."/>
            <person name="Sims D."/>
            <person name="Civerolo E.L."/>
        </authorList>
    </citation>
    <scope>NUCLEOTIDE SEQUENCE [LARGE SCALE GENOMIC DNA]</scope>
    <source>
        <strain>M23</strain>
    </source>
</reference>
<protein>
    <recommendedName>
        <fullName evidence="1">Ribosomal RNA small subunit methyltransferase H</fullName>
        <ecNumber evidence="1">2.1.1.199</ecNumber>
    </recommendedName>
    <alternativeName>
        <fullName evidence="1">16S rRNA m(4)C1402 methyltransferase</fullName>
    </alternativeName>
    <alternativeName>
        <fullName evidence="1">rRNA (cytosine-N(4)-)-methyltransferase RsmH</fullName>
    </alternativeName>
</protein>
<organism>
    <name type="scientific">Xylella fastidiosa (strain M23)</name>
    <dbReference type="NCBI Taxonomy" id="405441"/>
    <lineage>
        <taxon>Bacteria</taxon>
        <taxon>Pseudomonadati</taxon>
        <taxon>Pseudomonadota</taxon>
        <taxon>Gammaproteobacteria</taxon>
        <taxon>Lysobacterales</taxon>
        <taxon>Lysobacteraceae</taxon>
        <taxon>Xylella</taxon>
    </lineage>
</organism>
<gene>
    <name evidence="1" type="primary">rsmH</name>
    <name type="synonym">mraW</name>
    <name type="ordered locus">XfasM23_1976</name>
</gene>
<dbReference type="EC" id="2.1.1.199" evidence="1"/>
<dbReference type="EMBL" id="CP001011">
    <property type="protein sequence ID" value="ACB93375.1"/>
    <property type="status" value="ALT_INIT"/>
    <property type="molecule type" value="Genomic_DNA"/>
</dbReference>
<dbReference type="SMR" id="B2I9C0"/>
<dbReference type="KEGG" id="xfn:XfasM23_1976"/>
<dbReference type="HOGENOM" id="CLU_038422_3_0_6"/>
<dbReference type="Proteomes" id="UP000001698">
    <property type="component" value="Chromosome"/>
</dbReference>
<dbReference type="GO" id="GO:0005737">
    <property type="term" value="C:cytoplasm"/>
    <property type="evidence" value="ECO:0007669"/>
    <property type="project" value="UniProtKB-SubCell"/>
</dbReference>
<dbReference type="GO" id="GO:0071424">
    <property type="term" value="F:rRNA (cytosine-N4-)-methyltransferase activity"/>
    <property type="evidence" value="ECO:0007669"/>
    <property type="project" value="UniProtKB-UniRule"/>
</dbReference>
<dbReference type="GO" id="GO:0070475">
    <property type="term" value="P:rRNA base methylation"/>
    <property type="evidence" value="ECO:0007669"/>
    <property type="project" value="UniProtKB-UniRule"/>
</dbReference>
<dbReference type="Gene3D" id="1.10.150.170">
    <property type="entry name" value="Putative methyltransferase TM0872, insert domain"/>
    <property type="match status" value="1"/>
</dbReference>
<dbReference type="Gene3D" id="3.40.50.150">
    <property type="entry name" value="Vaccinia Virus protein VP39"/>
    <property type="match status" value="1"/>
</dbReference>
<dbReference type="HAMAP" id="MF_01007">
    <property type="entry name" value="16SrRNA_methyltr_H"/>
    <property type="match status" value="1"/>
</dbReference>
<dbReference type="InterPro" id="IPR002903">
    <property type="entry name" value="RsmH"/>
</dbReference>
<dbReference type="InterPro" id="IPR023397">
    <property type="entry name" value="SAM-dep_MeTrfase_MraW_recog"/>
</dbReference>
<dbReference type="InterPro" id="IPR029063">
    <property type="entry name" value="SAM-dependent_MTases_sf"/>
</dbReference>
<dbReference type="NCBIfam" id="TIGR00006">
    <property type="entry name" value="16S rRNA (cytosine(1402)-N(4))-methyltransferase RsmH"/>
    <property type="match status" value="1"/>
</dbReference>
<dbReference type="PANTHER" id="PTHR11265:SF0">
    <property type="entry name" value="12S RRNA N4-METHYLCYTIDINE METHYLTRANSFERASE"/>
    <property type="match status" value="1"/>
</dbReference>
<dbReference type="PANTHER" id="PTHR11265">
    <property type="entry name" value="S-ADENOSYL-METHYLTRANSFERASE MRAW"/>
    <property type="match status" value="1"/>
</dbReference>
<dbReference type="Pfam" id="PF01795">
    <property type="entry name" value="Methyltransf_5"/>
    <property type="match status" value="1"/>
</dbReference>
<dbReference type="PIRSF" id="PIRSF004486">
    <property type="entry name" value="MraW"/>
    <property type="match status" value="1"/>
</dbReference>
<dbReference type="SUPFAM" id="SSF81799">
    <property type="entry name" value="Putative methyltransferase TM0872, insert domain"/>
    <property type="match status" value="1"/>
</dbReference>
<dbReference type="SUPFAM" id="SSF53335">
    <property type="entry name" value="S-adenosyl-L-methionine-dependent methyltransferases"/>
    <property type="match status" value="1"/>
</dbReference>
<evidence type="ECO:0000255" key="1">
    <source>
        <dbReference type="HAMAP-Rule" id="MF_01007"/>
    </source>
</evidence>
<evidence type="ECO:0000305" key="2"/>